<name>ODPA_RICPR</name>
<feature type="chain" id="PRO_0000162204" description="Pyruvate dehydrogenase E1 component subunit alpha">
    <location>
        <begin position="1"/>
        <end position="326"/>
    </location>
</feature>
<protein>
    <recommendedName>
        <fullName>Pyruvate dehydrogenase E1 component subunit alpha</fullName>
        <ecNumber>1.2.4.1</ecNumber>
    </recommendedName>
</protein>
<sequence>MDIKPEKYKPIKEEYIKSFKDMLLLRRFEEKCGQLYGMGKIGGFCHLYIGQEAVISAVAMIKKKGDSTITSYRDHAHIILAGTEPKYVLAELMGRATGCSKGKGGSMHLFDIPNKFYGGHGIVGAQVPIGTGLAFAEKYNGTNNICFTFLGDGAVNQGQVYEAFNMASLWGLPIVYIIENNEYSMGTSVARSTFMCDLYKKGESFGIRGFQLDGMDFEEMYNGTKQVAEYVRENSFPVILEVKTYRYRGHSMSDPAKYRSKEEVEKYKERDTLVRIREIILDNKYATEADLKAIEQSVREIIKVAVEFSENSPLPAEDELYTEIYV</sequence>
<keyword id="KW-0560">Oxidoreductase</keyword>
<keyword id="KW-0670">Pyruvate</keyword>
<keyword id="KW-1185">Reference proteome</keyword>
<keyword id="KW-0786">Thiamine pyrophosphate</keyword>
<evidence type="ECO:0000250" key="1"/>
<reference key="1">
    <citation type="journal article" date="1998" name="Nature">
        <title>The genome sequence of Rickettsia prowazekii and the origin of mitochondria.</title>
        <authorList>
            <person name="Andersson S.G.E."/>
            <person name="Zomorodipour A."/>
            <person name="Andersson J.O."/>
            <person name="Sicheritz-Ponten T."/>
            <person name="Alsmark U.C.M."/>
            <person name="Podowski R.M."/>
            <person name="Naeslund A.K."/>
            <person name="Eriksson A.-S."/>
            <person name="Winkler H.H."/>
            <person name="Kurland C.G."/>
        </authorList>
    </citation>
    <scope>NUCLEOTIDE SEQUENCE [LARGE SCALE GENOMIC DNA]</scope>
    <source>
        <strain>Madrid E</strain>
    </source>
</reference>
<dbReference type="EC" id="1.2.4.1"/>
<dbReference type="EMBL" id="AJ235271">
    <property type="protein sequence ID" value="CAA14723.1"/>
    <property type="molecule type" value="Genomic_DNA"/>
</dbReference>
<dbReference type="PIR" id="A71681">
    <property type="entry name" value="A71681"/>
</dbReference>
<dbReference type="RefSeq" id="NP_220646.1">
    <property type="nucleotide sequence ID" value="NC_000963.1"/>
</dbReference>
<dbReference type="RefSeq" id="WP_004596096.1">
    <property type="nucleotide sequence ID" value="NC_000963.1"/>
</dbReference>
<dbReference type="SMR" id="Q9ZDR4"/>
<dbReference type="STRING" id="272947.gene:17555342"/>
<dbReference type="EnsemblBacteria" id="CAA14723">
    <property type="protein sequence ID" value="CAA14723"/>
    <property type="gene ID" value="CAA14723"/>
</dbReference>
<dbReference type="GeneID" id="57569389"/>
<dbReference type="KEGG" id="rpr:RP261"/>
<dbReference type="PATRIC" id="fig|272947.5.peg.268"/>
<dbReference type="eggNOG" id="COG1071">
    <property type="taxonomic scope" value="Bacteria"/>
</dbReference>
<dbReference type="HOGENOM" id="CLU_029393_5_0_5"/>
<dbReference type="OrthoDB" id="9766715at2"/>
<dbReference type="Proteomes" id="UP000002480">
    <property type="component" value="Chromosome"/>
</dbReference>
<dbReference type="GO" id="GO:0043231">
    <property type="term" value="C:intracellular membrane-bounded organelle"/>
    <property type="evidence" value="ECO:0007669"/>
    <property type="project" value="InterPro"/>
</dbReference>
<dbReference type="GO" id="GO:0004739">
    <property type="term" value="F:pyruvate dehydrogenase (acetyl-transferring) activity"/>
    <property type="evidence" value="ECO:0007669"/>
    <property type="project" value="UniProtKB-EC"/>
</dbReference>
<dbReference type="GO" id="GO:0006086">
    <property type="term" value="P:pyruvate decarboxylation to acetyl-CoA"/>
    <property type="evidence" value="ECO:0007669"/>
    <property type="project" value="InterPro"/>
</dbReference>
<dbReference type="CDD" id="cd02000">
    <property type="entry name" value="TPP_E1_PDC_ADC_BCADC"/>
    <property type="match status" value="1"/>
</dbReference>
<dbReference type="FunFam" id="3.40.50.970:FF:000013">
    <property type="entry name" value="Pyruvate dehydrogenase E1 component subunit alpha"/>
    <property type="match status" value="1"/>
</dbReference>
<dbReference type="Gene3D" id="3.40.50.970">
    <property type="match status" value="1"/>
</dbReference>
<dbReference type="InterPro" id="IPR001017">
    <property type="entry name" value="DH_E1"/>
</dbReference>
<dbReference type="InterPro" id="IPR050642">
    <property type="entry name" value="PDH_E1_Alpha_Subunit"/>
</dbReference>
<dbReference type="InterPro" id="IPR017597">
    <property type="entry name" value="Pyrv_DH_E1_asu_subgrp-y"/>
</dbReference>
<dbReference type="InterPro" id="IPR029061">
    <property type="entry name" value="THDP-binding"/>
</dbReference>
<dbReference type="NCBIfam" id="TIGR03182">
    <property type="entry name" value="PDH_E1_alph_y"/>
    <property type="match status" value="1"/>
</dbReference>
<dbReference type="PANTHER" id="PTHR11516:SF60">
    <property type="entry name" value="PYRUVATE DEHYDROGENASE E1 COMPONENT SUBUNIT ALPHA"/>
    <property type="match status" value="1"/>
</dbReference>
<dbReference type="PANTHER" id="PTHR11516">
    <property type="entry name" value="PYRUVATE DEHYDROGENASE E1 COMPONENT, ALPHA SUBUNIT BACTERIAL AND ORGANELLAR"/>
    <property type="match status" value="1"/>
</dbReference>
<dbReference type="Pfam" id="PF00676">
    <property type="entry name" value="E1_dh"/>
    <property type="match status" value="1"/>
</dbReference>
<dbReference type="SUPFAM" id="SSF52518">
    <property type="entry name" value="Thiamin diphosphate-binding fold (THDP-binding)"/>
    <property type="match status" value="1"/>
</dbReference>
<organism>
    <name type="scientific">Rickettsia prowazekii (strain Madrid E)</name>
    <dbReference type="NCBI Taxonomy" id="272947"/>
    <lineage>
        <taxon>Bacteria</taxon>
        <taxon>Pseudomonadati</taxon>
        <taxon>Pseudomonadota</taxon>
        <taxon>Alphaproteobacteria</taxon>
        <taxon>Rickettsiales</taxon>
        <taxon>Rickettsiaceae</taxon>
        <taxon>Rickettsieae</taxon>
        <taxon>Rickettsia</taxon>
        <taxon>typhus group</taxon>
    </lineage>
</organism>
<comment type="function">
    <text evidence="1">The pyruvate dehydrogenase complex catalyzes the overall conversion of pyruvate to acetyl-CoA and CO(2). It contains multiple copies of three enzymatic components: pyruvate dehydrogenase (E1), dihydrolipoamide acetyltransferase (E2) and lipoamide dehydrogenase (E3) (By similarity).</text>
</comment>
<comment type="catalytic activity">
    <reaction>
        <text>N(6)-[(R)-lipoyl]-L-lysyl-[protein] + pyruvate + H(+) = N(6)-[(R)-S(8)-acetyldihydrolipoyl]-L-lysyl-[protein] + CO2</text>
        <dbReference type="Rhea" id="RHEA:19189"/>
        <dbReference type="Rhea" id="RHEA-COMP:10474"/>
        <dbReference type="Rhea" id="RHEA-COMP:10478"/>
        <dbReference type="ChEBI" id="CHEBI:15361"/>
        <dbReference type="ChEBI" id="CHEBI:15378"/>
        <dbReference type="ChEBI" id="CHEBI:16526"/>
        <dbReference type="ChEBI" id="CHEBI:83099"/>
        <dbReference type="ChEBI" id="CHEBI:83111"/>
        <dbReference type="EC" id="1.2.4.1"/>
    </reaction>
</comment>
<comment type="cofactor">
    <cofactor evidence="1">
        <name>thiamine diphosphate</name>
        <dbReference type="ChEBI" id="CHEBI:58937"/>
    </cofactor>
</comment>
<comment type="subunit">
    <text>Heterodimer of an alpha and a beta chain.</text>
</comment>
<proteinExistence type="inferred from homology"/>
<accession>Q9ZDR4</accession>
<gene>
    <name type="primary">pdhA</name>
    <name type="ordered locus">RP261</name>
</gene>